<evidence type="ECO:0000255" key="1">
    <source>
        <dbReference type="HAMAP-Rule" id="MF_01320"/>
    </source>
</evidence>
<evidence type="ECO:0000256" key="2">
    <source>
        <dbReference type="SAM" id="MobiDB-lite"/>
    </source>
</evidence>
<evidence type="ECO:0000305" key="3"/>
<proteinExistence type="inferred from homology"/>
<comment type="function">
    <text evidence="1">One of the primary rRNA binding proteins. Required for association of the 30S and 50S subunits to form the 70S ribosome, for tRNA binding and peptide bond formation. It has been suggested to have peptidyltransferase activity; this is somewhat controversial. Makes several contacts with the 16S rRNA in the 70S ribosome.</text>
</comment>
<comment type="subunit">
    <text evidence="1">Part of the 50S ribosomal subunit. Forms a bridge to the 30S subunit in the 70S ribosome.</text>
</comment>
<comment type="similarity">
    <text evidence="1">Belongs to the universal ribosomal protein uL2 family.</text>
</comment>
<sequence length="276" mass="30153">MAIKHYKPITNGRRNMTGSDFAEITSTSPEKSLLAPLPRKAGRNNQGKLTVRHRGGGHKRQYRIIDFKRNKDGIPAKVATIEYDPNRSANIALLHYLDGEKRYIIAPKGLTVGTQVVNGPEADIKVGNCLPLQNIPVGTVIHNIELKPGKGGQLVRSAGASAQVLGKEGKYVLVRLKSGEVRMILSTCRATIGQVGNEQHELINIGKAGRSRWKGIRPTVRGSVMNPNDHPHGGGEGRTSIGRPSPMSPWGKPTLGKKTRKKKNRSNKLIVRGRKK</sequence>
<accession>B9E9J4</accession>
<protein>
    <recommendedName>
        <fullName evidence="1">Large ribosomal subunit protein uL2</fullName>
    </recommendedName>
    <alternativeName>
        <fullName evidence="3">50S ribosomal protein L2</fullName>
    </alternativeName>
</protein>
<organism>
    <name type="scientific">Macrococcus caseolyticus (strain JCSC5402)</name>
    <name type="common">Macrococcoides caseolyticum</name>
    <dbReference type="NCBI Taxonomy" id="458233"/>
    <lineage>
        <taxon>Bacteria</taxon>
        <taxon>Bacillati</taxon>
        <taxon>Bacillota</taxon>
        <taxon>Bacilli</taxon>
        <taxon>Bacillales</taxon>
        <taxon>Staphylococcaceae</taxon>
        <taxon>Macrococcoides</taxon>
    </lineage>
</organism>
<name>RL2_MACCJ</name>
<feature type="chain" id="PRO_1000165755" description="Large ribosomal subunit protein uL2">
    <location>
        <begin position="1"/>
        <end position="276"/>
    </location>
</feature>
<feature type="region of interest" description="Disordered" evidence="2">
    <location>
        <begin position="36"/>
        <end position="55"/>
    </location>
</feature>
<feature type="region of interest" description="Disordered" evidence="2">
    <location>
        <begin position="219"/>
        <end position="276"/>
    </location>
</feature>
<feature type="compositionally biased region" description="Basic residues" evidence="2">
    <location>
        <begin position="255"/>
        <end position="276"/>
    </location>
</feature>
<reference key="1">
    <citation type="journal article" date="2009" name="J. Bacteriol.">
        <title>Complete genome sequence of Macrococcus caseolyticus strain JCSCS5402, reflecting the ancestral genome of the human-pathogenic staphylococci.</title>
        <authorList>
            <person name="Baba T."/>
            <person name="Kuwahara-Arai K."/>
            <person name="Uchiyama I."/>
            <person name="Takeuchi F."/>
            <person name="Ito T."/>
            <person name="Hiramatsu K."/>
        </authorList>
    </citation>
    <scope>NUCLEOTIDE SEQUENCE [LARGE SCALE GENOMIC DNA]</scope>
    <source>
        <strain>JCSC5402</strain>
    </source>
</reference>
<keyword id="KW-1185">Reference proteome</keyword>
<keyword id="KW-0687">Ribonucleoprotein</keyword>
<keyword id="KW-0689">Ribosomal protein</keyword>
<keyword id="KW-0694">RNA-binding</keyword>
<keyword id="KW-0699">rRNA-binding</keyword>
<gene>
    <name evidence="1" type="primary">rplB</name>
    <name type="ordered locus">MCCL_0198</name>
</gene>
<dbReference type="EMBL" id="AP009484">
    <property type="protein sequence ID" value="BAH16905.1"/>
    <property type="molecule type" value="Genomic_DNA"/>
</dbReference>
<dbReference type="RefSeq" id="WP_012656109.1">
    <property type="nucleotide sequence ID" value="NC_011999.1"/>
</dbReference>
<dbReference type="SMR" id="B9E9J4"/>
<dbReference type="STRING" id="458233.MCCL_0198"/>
<dbReference type="GeneID" id="61130620"/>
<dbReference type="KEGG" id="mcl:MCCL_0198"/>
<dbReference type="eggNOG" id="COG0090">
    <property type="taxonomic scope" value="Bacteria"/>
</dbReference>
<dbReference type="HOGENOM" id="CLU_036235_2_1_9"/>
<dbReference type="OrthoDB" id="9778722at2"/>
<dbReference type="Proteomes" id="UP000001383">
    <property type="component" value="Chromosome"/>
</dbReference>
<dbReference type="GO" id="GO:0015934">
    <property type="term" value="C:large ribosomal subunit"/>
    <property type="evidence" value="ECO:0007669"/>
    <property type="project" value="InterPro"/>
</dbReference>
<dbReference type="GO" id="GO:0019843">
    <property type="term" value="F:rRNA binding"/>
    <property type="evidence" value="ECO:0007669"/>
    <property type="project" value="UniProtKB-UniRule"/>
</dbReference>
<dbReference type="GO" id="GO:0003735">
    <property type="term" value="F:structural constituent of ribosome"/>
    <property type="evidence" value="ECO:0007669"/>
    <property type="project" value="InterPro"/>
</dbReference>
<dbReference type="GO" id="GO:0016740">
    <property type="term" value="F:transferase activity"/>
    <property type="evidence" value="ECO:0007669"/>
    <property type="project" value="InterPro"/>
</dbReference>
<dbReference type="GO" id="GO:0002181">
    <property type="term" value="P:cytoplasmic translation"/>
    <property type="evidence" value="ECO:0007669"/>
    <property type="project" value="TreeGrafter"/>
</dbReference>
<dbReference type="FunFam" id="2.30.30.30:FF:000001">
    <property type="entry name" value="50S ribosomal protein L2"/>
    <property type="match status" value="1"/>
</dbReference>
<dbReference type="FunFam" id="2.40.50.140:FF:000003">
    <property type="entry name" value="50S ribosomal protein L2"/>
    <property type="match status" value="1"/>
</dbReference>
<dbReference type="FunFam" id="4.10.950.10:FF:000001">
    <property type="entry name" value="50S ribosomal protein L2"/>
    <property type="match status" value="1"/>
</dbReference>
<dbReference type="Gene3D" id="2.30.30.30">
    <property type="match status" value="1"/>
</dbReference>
<dbReference type="Gene3D" id="2.40.50.140">
    <property type="entry name" value="Nucleic acid-binding proteins"/>
    <property type="match status" value="1"/>
</dbReference>
<dbReference type="Gene3D" id="4.10.950.10">
    <property type="entry name" value="Ribosomal protein L2, domain 3"/>
    <property type="match status" value="1"/>
</dbReference>
<dbReference type="HAMAP" id="MF_01320_B">
    <property type="entry name" value="Ribosomal_uL2_B"/>
    <property type="match status" value="1"/>
</dbReference>
<dbReference type="InterPro" id="IPR012340">
    <property type="entry name" value="NA-bd_OB-fold"/>
</dbReference>
<dbReference type="InterPro" id="IPR014722">
    <property type="entry name" value="Rib_uL2_dom2"/>
</dbReference>
<dbReference type="InterPro" id="IPR002171">
    <property type="entry name" value="Ribosomal_uL2"/>
</dbReference>
<dbReference type="InterPro" id="IPR005880">
    <property type="entry name" value="Ribosomal_uL2_bac/org-type"/>
</dbReference>
<dbReference type="InterPro" id="IPR022669">
    <property type="entry name" value="Ribosomal_uL2_C"/>
</dbReference>
<dbReference type="InterPro" id="IPR022671">
    <property type="entry name" value="Ribosomal_uL2_CS"/>
</dbReference>
<dbReference type="InterPro" id="IPR014726">
    <property type="entry name" value="Ribosomal_uL2_dom3"/>
</dbReference>
<dbReference type="InterPro" id="IPR022666">
    <property type="entry name" value="Ribosomal_uL2_RNA-bd_dom"/>
</dbReference>
<dbReference type="InterPro" id="IPR008991">
    <property type="entry name" value="Translation_prot_SH3-like_sf"/>
</dbReference>
<dbReference type="NCBIfam" id="TIGR01171">
    <property type="entry name" value="rplB_bact"/>
    <property type="match status" value="1"/>
</dbReference>
<dbReference type="PANTHER" id="PTHR13691:SF5">
    <property type="entry name" value="LARGE RIBOSOMAL SUBUNIT PROTEIN UL2M"/>
    <property type="match status" value="1"/>
</dbReference>
<dbReference type="PANTHER" id="PTHR13691">
    <property type="entry name" value="RIBOSOMAL PROTEIN L2"/>
    <property type="match status" value="1"/>
</dbReference>
<dbReference type="Pfam" id="PF00181">
    <property type="entry name" value="Ribosomal_L2"/>
    <property type="match status" value="1"/>
</dbReference>
<dbReference type="Pfam" id="PF03947">
    <property type="entry name" value="Ribosomal_L2_C"/>
    <property type="match status" value="1"/>
</dbReference>
<dbReference type="PIRSF" id="PIRSF002158">
    <property type="entry name" value="Ribosomal_L2"/>
    <property type="match status" value="1"/>
</dbReference>
<dbReference type="SMART" id="SM01383">
    <property type="entry name" value="Ribosomal_L2"/>
    <property type="match status" value="1"/>
</dbReference>
<dbReference type="SMART" id="SM01382">
    <property type="entry name" value="Ribosomal_L2_C"/>
    <property type="match status" value="1"/>
</dbReference>
<dbReference type="SUPFAM" id="SSF50249">
    <property type="entry name" value="Nucleic acid-binding proteins"/>
    <property type="match status" value="1"/>
</dbReference>
<dbReference type="SUPFAM" id="SSF50104">
    <property type="entry name" value="Translation proteins SH3-like domain"/>
    <property type="match status" value="1"/>
</dbReference>
<dbReference type="PROSITE" id="PS00467">
    <property type="entry name" value="RIBOSOMAL_L2"/>
    <property type="match status" value="1"/>
</dbReference>